<protein>
    <recommendedName>
        <fullName evidence="1">DNA ligase</fullName>
        <ecNumber evidence="1">6.5.1.2</ecNumber>
    </recommendedName>
    <alternativeName>
        <fullName evidence="1">Polydeoxyribonucleotide synthase [NAD(+)]</fullName>
    </alternativeName>
</protein>
<gene>
    <name evidence="1" type="primary">ligA</name>
    <name type="ordered locus">BCAH820_0337</name>
</gene>
<sequence>MSKEIAKKRIEELRDLLNTFNYQYHVLDNPSVSDAEYDRNMQELIKLEAENPEFMSEDSPSIRVGGTVLDIFEKVTHKSPMLSLGNAFNEGDLRDFDRRVRQGIDDANVRYICELKIDGLAVSLHYEKGRFIQGATRGDGVTGEDITQNLKTIKAIPLRLNEEVTLEARGEAYMPKRSFVKLNEEKEQNGEDVFANPRNAAAGSIRQLDPKIAAKRNLSMFVYGLANVEEKTIPSHSESLDYLGELGFKTNPNRRTCETIEEVIAYVEEWQEKRPHLDYEIDGIVIKVDDVALQESLGTTAKSPRWAIAYKFPAEEVVTRLTGIELSVGRTGVVTPTAELEPVRVAGTIVRRASLHNEDLIREKDIRIGDYVVVKKAGDIIPEVINVIFDKRTGGEEEYHMPTHCPACESELVRLEEEVALRCINPTCPAQIREGLIHFVSRNAMNIDGLGERVITQLFDADYIRTFADLYSLTKEQLLQLERFGEKSATNLVQAIENSKENSLERLLFGLGIRHVGAKAARTFAEHFETMDALVKATEEELKAINEIGEKMAQSVVAYFDNEDVLELLQQFKEYGVNMTYKGIKIADLQNVESYFAGKTVVLTGKLEVMGRSEAKKKIEALGGKVTGSVSKSTDLVVAGEAAGSKLAQAEKHNVEVWNEERFLQELNK</sequence>
<name>DNLJ_BACC0</name>
<accession>B7JM96</accession>
<proteinExistence type="inferred from homology"/>
<dbReference type="EC" id="6.5.1.2" evidence="1"/>
<dbReference type="EMBL" id="CP001283">
    <property type="protein sequence ID" value="ACK87832.1"/>
    <property type="molecule type" value="Genomic_DNA"/>
</dbReference>
<dbReference type="RefSeq" id="WP_000031431.1">
    <property type="nucleotide sequence ID" value="NC_011773.1"/>
</dbReference>
<dbReference type="SMR" id="B7JM96"/>
<dbReference type="KEGG" id="bcu:BCAH820_0337"/>
<dbReference type="HOGENOM" id="CLU_007764_2_1_9"/>
<dbReference type="Proteomes" id="UP000001363">
    <property type="component" value="Chromosome"/>
</dbReference>
<dbReference type="GO" id="GO:0005829">
    <property type="term" value="C:cytosol"/>
    <property type="evidence" value="ECO:0007669"/>
    <property type="project" value="TreeGrafter"/>
</dbReference>
<dbReference type="GO" id="GO:0003677">
    <property type="term" value="F:DNA binding"/>
    <property type="evidence" value="ECO:0007669"/>
    <property type="project" value="InterPro"/>
</dbReference>
<dbReference type="GO" id="GO:0003911">
    <property type="term" value="F:DNA ligase (NAD+) activity"/>
    <property type="evidence" value="ECO:0007669"/>
    <property type="project" value="UniProtKB-UniRule"/>
</dbReference>
<dbReference type="GO" id="GO:0046872">
    <property type="term" value="F:metal ion binding"/>
    <property type="evidence" value="ECO:0007669"/>
    <property type="project" value="UniProtKB-KW"/>
</dbReference>
<dbReference type="GO" id="GO:0006281">
    <property type="term" value="P:DNA repair"/>
    <property type="evidence" value="ECO:0007669"/>
    <property type="project" value="UniProtKB-KW"/>
</dbReference>
<dbReference type="GO" id="GO:0006260">
    <property type="term" value="P:DNA replication"/>
    <property type="evidence" value="ECO:0007669"/>
    <property type="project" value="UniProtKB-KW"/>
</dbReference>
<dbReference type="CDD" id="cd17748">
    <property type="entry name" value="BRCT_DNA_ligase_like"/>
    <property type="match status" value="1"/>
</dbReference>
<dbReference type="CDD" id="cd00114">
    <property type="entry name" value="LIGANc"/>
    <property type="match status" value="1"/>
</dbReference>
<dbReference type="FunFam" id="1.10.150.20:FF:000006">
    <property type="entry name" value="DNA ligase"/>
    <property type="match status" value="1"/>
</dbReference>
<dbReference type="FunFam" id="1.10.150.20:FF:000007">
    <property type="entry name" value="DNA ligase"/>
    <property type="match status" value="1"/>
</dbReference>
<dbReference type="FunFam" id="1.10.287.610:FF:000002">
    <property type="entry name" value="DNA ligase"/>
    <property type="match status" value="1"/>
</dbReference>
<dbReference type="FunFam" id="2.40.50.140:FF:000012">
    <property type="entry name" value="DNA ligase"/>
    <property type="match status" value="1"/>
</dbReference>
<dbReference type="FunFam" id="3.30.470.30:FF:000001">
    <property type="entry name" value="DNA ligase"/>
    <property type="match status" value="1"/>
</dbReference>
<dbReference type="FunFam" id="3.40.50.10190:FF:000026">
    <property type="entry name" value="DNA ligase"/>
    <property type="match status" value="1"/>
</dbReference>
<dbReference type="FunFam" id="6.20.10.30:FF:000002">
    <property type="entry name" value="DNA ligase"/>
    <property type="match status" value="1"/>
</dbReference>
<dbReference type="Gene3D" id="6.20.10.30">
    <property type="match status" value="1"/>
</dbReference>
<dbReference type="Gene3D" id="1.10.150.20">
    <property type="entry name" value="5' to 3' exonuclease, C-terminal subdomain"/>
    <property type="match status" value="2"/>
</dbReference>
<dbReference type="Gene3D" id="3.40.50.10190">
    <property type="entry name" value="BRCT domain"/>
    <property type="match status" value="1"/>
</dbReference>
<dbReference type="Gene3D" id="3.30.470.30">
    <property type="entry name" value="DNA ligase/mRNA capping enzyme"/>
    <property type="match status" value="1"/>
</dbReference>
<dbReference type="Gene3D" id="1.10.287.610">
    <property type="entry name" value="Helix hairpin bin"/>
    <property type="match status" value="1"/>
</dbReference>
<dbReference type="Gene3D" id="2.40.50.140">
    <property type="entry name" value="Nucleic acid-binding proteins"/>
    <property type="match status" value="1"/>
</dbReference>
<dbReference type="HAMAP" id="MF_01588">
    <property type="entry name" value="DNA_ligase_A"/>
    <property type="match status" value="1"/>
</dbReference>
<dbReference type="InterPro" id="IPR001357">
    <property type="entry name" value="BRCT_dom"/>
</dbReference>
<dbReference type="InterPro" id="IPR036420">
    <property type="entry name" value="BRCT_dom_sf"/>
</dbReference>
<dbReference type="InterPro" id="IPR041663">
    <property type="entry name" value="DisA/LigA_HHH"/>
</dbReference>
<dbReference type="InterPro" id="IPR001679">
    <property type="entry name" value="DNA_ligase"/>
</dbReference>
<dbReference type="InterPro" id="IPR018239">
    <property type="entry name" value="DNA_ligase_AS"/>
</dbReference>
<dbReference type="InterPro" id="IPR033136">
    <property type="entry name" value="DNA_ligase_CS"/>
</dbReference>
<dbReference type="InterPro" id="IPR013839">
    <property type="entry name" value="DNAligase_adenylation"/>
</dbReference>
<dbReference type="InterPro" id="IPR013840">
    <property type="entry name" value="DNAligase_N"/>
</dbReference>
<dbReference type="InterPro" id="IPR003583">
    <property type="entry name" value="Hlx-hairpin-Hlx_DNA-bd_motif"/>
</dbReference>
<dbReference type="InterPro" id="IPR012340">
    <property type="entry name" value="NA-bd_OB-fold"/>
</dbReference>
<dbReference type="InterPro" id="IPR004150">
    <property type="entry name" value="NAD_DNA_ligase_OB"/>
</dbReference>
<dbReference type="InterPro" id="IPR010994">
    <property type="entry name" value="RuvA_2-like"/>
</dbReference>
<dbReference type="InterPro" id="IPR004149">
    <property type="entry name" value="Znf_DNAligase_C4"/>
</dbReference>
<dbReference type="NCBIfam" id="TIGR00575">
    <property type="entry name" value="dnlj"/>
    <property type="match status" value="1"/>
</dbReference>
<dbReference type="NCBIfam" id="NF005932">
    <property type="entry name" value="PRK07956.1"/>
    <property type="match status" value="1"/>
</dbReference>
<dbReference type="PANTHER" id="PTHR23389">
    <property type="entry name" value="CHROMOSOME TRANSMISSION FIDELITY FACTOR 18"/>
    <property type="match status" value="1"/>
</dbReference>
<dbReference type="PANTHER" id="PTHR23389:SF9">
    <property type="entry name" value="DNA LIGASE"/>
    <property type="match status" value="1"/>
</dbReference>
<dbReference type="Pfam" id="PF00533">
    <property type="entry name" value="BRCT"/>
    <property type="match status" value="1"/>
</dbReference>
<dbReference type="Pfam" id="PF01653">
    <property type="entry name" value="DNA_ligase_aden"/>
    <property type="match status" value="1"/>
</dbReference>
<dbReference type="Pfam" id="PF03120">
    <property type="entry name" value="DNA_ligase_OB"/>
    <property type="match status" value="1"/>
</dbReference>
<dbReference type="Pfam" id="PF03119">
    <property type="entry name" value="DNA_ligase_ZBD"/>
    <property type="match status" value="1"/>
</dbReference>
<dbReference type="Pfam" id="PF12826">
    <property type="entry name" value="HHH_2"/>
    <property type="match status" value="1"/>
</dbReference>
<dbReference type="Pfam" id="PF14520">
    <property type="entry name" value="HHH_5"/>
    <property type="match status" value="1"/>
</dbReference>
<dbReference type="Pfam" id="PF22745">
    <property type="entry name" value="Nlig-Ia"/>
    <property type="match status" value="1"/>
</dbReference>
<dbReference type="PIRSF" id="PIRSF001604">
    <property type="entry name" value="LigA"/>
    <property type="match status" value="1"/>
</dbReference>
<dbReference type="SMART" id="SM00292">
    <property type="entry name" value="BRCT"/>
    <property type="match status" value="1"/>
</dbReference>
<dbReference type="SMART" id="SM00278">
    <property type="entry name" value="HhH1"/>
    <property type="match status" value="3"/>
</dbReference>
<dbReference type="SMART" id="SM00532">
    <property type="entry name" value="LIGANc"/>
    <property type="match status" value="1"/>
</dbReference>
<dbReference type="SUPFAM" id="SSF52113">
    <property type="entry name" value="BRCT domain"/>
    <property type="match status" value="1"/>
</dbReference>
<dbReference type="SUPFAM" id="SSF56091">
    <property type="entry name" value="DNA ligase/mRNA capping enzyme, catalytic domain"/>
    <property type="match status" value="1"/>
</dbReference>
<dbReference type="SUPFAM" id="SSF50249">
    <property type="entry name" value="Nucleic acid-binding proteins"/>
    <property type="match status" value="1"/>
</dbReference>
<dbReference type="SUPFAM" id="SSF47781">
    <property type="entry name" value="RuvA domain 2-like"/>
    <property type="match status" value="1"/>
</dbReference>
<dbReference type="PROSITE" id="PS50172">
    <property type="entry name" value="BRCT"/>
    <property type="match status" value="1"/>
</dbReference>
<dbReference type="PROSITE" id="PS01055">
    <property type="entry name" value="DNA_LIGASE_N1"/>
    <property type="match status" value="1"/>
</dbReference>
<dbReference type="PROSITE" id="PS01056">
    <property type="entry name" value="DNA_LIGASE_N2"/>
    <property type="match status" value="1"/>
</dbReference>
<evidence type="ECO:0000255" key="1">
    <source>
        <dbReference type="HAMAP-Rule" id="MF_01588"/>
    </source>
</evidence>
<organism>
    <name type="scientific">Bacillus cereus (strain AH820)</name>
    <dbReference type="NCBI Taxonomy" id="405535"/>
    <lineage>
        <taxon>Bacteria</taxon>
        <taxon>Bacillati</taxon>
        <taxon>Bacillota</taxon>
        <taxon>Bacilli</taxon>
        <taxon>Bacillales</taxon>
        <taxon>Bacillaceae</taxon>
        <taxon>Bacillus</taxon>
        <taxon>Bacillus cereus group</taxon>
    </lineage>
</organism>
<comment type="function">
    <text evidence="1">DNA ligase that catalyzes the formation of phosphodiester linkages between 5'-phosphoryl and 3'-hydroxyl groups in double-stranded DNA using NAD as a coenzyme and as the energy source for the reaction. It is essential for DNA replication and repair of damaged DNA.</text>
</comment>
<comment type="catalytic activity">
    <reaction evidence="1">
        <text>NAD(+) + (deoxyribonucleotide)n-3'-hydroxyl + 5'-phospho-(deoxyribonucleotide)m = (deoxyribonucleotide)n+m + AMP + beta-nicotinamide D-nucleotide.</text>
        <dbReference type="EC" id="6.5.1.2"/>
    </reaction>
</comment>
<comment type="cofactor">
    <cofactor evidence="1">
        <name>Mg(2+)</name>
        <dbReference type="ChEBI" id="CHEBI:18420"/>
    </cofactor>
    <cofactor evidence="1">
        <name>Mn(2+)</name>
        <dbReference type="ChEBI" id="CHEBI:29035"/>
    </cofactor>
</comment>
<comment type="similarity">
    <text evidence="1">Belongs to the NAD-dependent DNA ligase family. LigA subfamily.</text>
</comment>
<keyword id="KW-0227">DNA damage</keyword>
<keyword id="KW-0234">DNA repair</keyword>
<keyword id="KW-0235">DNA replication</keyword>
<keyword id="KW-0436">Ligase</keyword>
<keyword id="KW-0460">Magnesium</keyword>
<keyword id="KW-0464">Manganese</keyword>
<keyword id="KW-0479">Metal-binding</keyword>
<keyword id="KW-0520">NAD</keyword>
<keyword id="KW-0862">Zinc</keyword>
<reference key="1">
    <citation type="submission" date="2008-10" db="EMBL/GenBank/DDBJ databases">
        <title>Genome sequence of Bacillus cereus AH820.</title>
        <authorList>
            <person name="Dodson R.J."/>
            <person name="Durkin A.S."/>
            <person name="Rosovitz M.J."/>
            <person name="Rasko D.A."/>
            <person name="Hoffmaster A."/>
            <person name="Ravel J."/>
            <person name="Sutton G."/>
        </authorList>
    </citation>
    <scope>NUCLEOTIDE SEQUENCE [LARGE SCALE GENOMIC DNA]</scope>
    <source>
        <strain>AH820</strain>
    </source>
</reference>
<feature type="chain" id="PRO_0000380299" description="DNA ligase">
    <location>
        <begin position="1"/>
        <end position="669"/>
    </location>
</feature>
<feature type="domain" description="BRCT" evidence="1">
    <location>
        <begin position="591"/>
        <end position="669"/>
    </location>
</feature>
<feature type="active site" description="N6-AMP-lysine intermediate" evidence="1">
    <location>
        <position position="116"/>
    </location>
</feature>
<feature type="binding site" evidence="1">
    <location>
        <begin position="34"/>
        <end position="38"/>
    </location>
    <ligand>
        <name>NAD(+)</name>
        <dbReference type="ChEBI" id="CHEBI:57540"/>
    </ligand>
</feature>
<feature type="binding site" evidence="1">
    <location>
        <begin position="83"/>
        <end position="84"/>
    </location>
    <ligand>
        <name>NAD(+)</name>
        <dbReference type="ChEBI" id="CHEBI:57540"/>
    </ligand>
</feature>
<feature type="binding site" evidence="1">
    <location>
        <position position="114"/>
    </location>
    <ligand>
        <name>NAD(+)</name>
        <dbReference type="ChEBI" id="CHEBI:57540"/>
    </ligand>
</feature>
<feature type="binding site" evidence="1">
    <location>
        <position position="137"/>
    </location>
    <ligand>
        <name>NAD(+)</name>
        <dbReference type="ChEBI" id="CHEBI:57540"/>
    </ligand>
</feature>
<feature type="binding site" evidence="1">
    <location>
        <position position="171"/>
    </location>
    <ligand>
        <name>NAD(+)</name>
        <dbReference type="ChEBI" id="CHEBI:57540"/>
    </ligand>
</feature>
<feature type="binding site" evidence="1">
    <location>
        <position position="287"/>
    </location>
    <ligand>
        <name>NAD(+)</name>
        <dbReference type="ChEBI" id="CHEBI:57540"/>
    </ligand>
</feature>
<feature type="binding site" evidence="1">
    <location>
        <position position="311"/>
    </location>
    <ligand>
        <name>NAD(+)</name>
        <dbReference type="ChEBI" id="CHEBI:57540"/>
    </ligand>
</feature>
<feature type="binding site" evidence="1">
    <location>
        <position position="405"/>
    </location>
    <ligand>
        <name>Zn(2+)</name>
        <dbReference type="ChEBI" id="CHEBI:29105"/>
    </ligand>
</feature>
<feature type="binding site" evidence="1">
    <location>
        <position position="408"/>
    </location>
    <ligand>
        <name>Zn(2+)</name>
        <dbReference type="ChEBI" id="CHEBI:29105"/>
    </ligand>
</feature>
<feature type="binding site" evidence="1">
    <location>
        <position position="423"/>
    </location>
    <ligand>
        <name>Zn(2+)</name>
        <dbReference type="ChEBI" id="CHEBI:29105"/>
    </ligand>
</feature>
<feature type="binding site" evidence="1">
    <location>
        <position position="428"/>
    </location>
    <ligand>
        <name>Zn(2+)</name>
        <dbReference type="ChEBI" id="CHEBI:29105"/>
    </ligand>
</feature>